<sequence>MAAPAIYQTDKVLRFEVPGSRRPSTYFFALVLTLGGLGFLFAGLSPFVETNLLPFSDTRGLTRFPQGVTMIFYGALATLFSLYYWLVLALDVGSGYNEFDKQNKKVTLFRRGFPGKNRIIEIVHPLENILGLKVQIKEGLNPRRAYFLKLKGARDLRLSPVGQPQPLAAVEDQVSAIARFLNIGVEGI</sequence>
<accession>Q7NPH6</accession>
<organism>
    <name type="scientific">Gloeobacter violaceus (strain ATCC 29082 / PCC 7421)</name>
    <dbReference type="NCBI Taxonomy" id="251221"/>
    <lineage>
        <taxon>Bacteria</taxon>
        <taxon>Bacillati</taxon>
        <taxon>Cyanobacteriota</taxon>
        <taxon>Cyanophyceae</taxon>
        <taxon>Gloeobacterales</taxon>
        <taxon>Gloeobacteraceae</taxon>
        <taxon>Gloeobacter</taxon>
    </lineage>
</organism>
<dbReference type="EMBL" id="BA000045">
    <property type="protein sequence ID" value="BAC88020.1"/>
    <property type="molecule type" value="Genomic_DNA"/>
</dbReference>
<dbReference type="RefSeq" id="NP_923025.1">
    <property type="nucleotide sequence ID" value="NC_005125.1"/>
</dbReference>
<dbReference type="RefSeq" id="WP_011140083.1">
    <property type="nucleotide sequence ID" value="NC_005125.1"/>
</dbReference>
<dbReference type="STRING" id="251221.gene:10757548"/>
<dbReference type="EnsemblBacteria" id="BAC88020">
    <property type="protein sequence ID" value="BAC88020"/>
    <property type="gene ID" value="BAC88020"/>
</dbReference>
<dbReference type="KEGG" id="gvi:glr0079"/>
<dbReference type="PATRIC" id="fig|251221.4.peg.81"/>
<dbReference type="eggNOG" id="ENOG502Z7YX">
    <property type="taxonomic scope" value="Bacteria"/>
</dbReference>
<dbReference type="HOGENOM" id="CLU_095465_0_0_3"/>
<dbReference type="InParanoid" id="Q7NPH6"/>
<dbReference type="OrthoDB" id="7059574at2"/>
<dbReference type="PhylomeDB" id="Q7NPH6"/>
<dbReference type="Proteomes" id="UP000000557">
    <property type="component" value="Chromosome"/>
</dbReference>
<dbReference type="GO" id="GO:0009522">
    <property type="term" value="C:photosystem I"/>
    <property type="evidence" value="ECO:0007669"/>
    <property type="project" value="InterPro"/>
</dbReference>
<dbReference type="GO" id="GO:0005886">
    <property type="term" value="C:plasma membrane"/>
    <property type="evidence" value="ECO:0007669"/>
    <property type="project" value="UniProtKB-SubCell"/>
</dbReference>
<dbReference type="GO" id="GO:0015979">
    <property type="term" value="P:photosynthesis"/>
    <property type="evidence" value="ECO:0007669"/>
    <property type="project" value="UniProtKB-UniRule"/>
</dbReference>
<dbReference type="HAMAP" id="MF_00437">
    <property type="entry name" value="Ycf4"/>
    <property type="match status" value="1"/>
</dbReference>
<dbReference type="InterPro" id="IPR003359">
    <property type="entry name" value="PSI_Ycf4_assembly"/>
</dbReference>
<dbReference type="NCBIfam" id="NF002712">
    <property type="entry name" value="PRK02542.1"/>
    <property type="match status" value="1"/>
</dbReference>
<dbReference type="Pfam" id="PF02392">
    <property type="entry name" value="Ycf4"/>
    <property type="match status" value="1"/>
</dbReference>
<reference key="1">
    <citation type="journal article" date="2003" name="DNA Res.">
        <title>Complete genome structure of Gloeobacter violaceus PCC 7421, a cyanobacterium that lacks thylakoids.</title>
        <authorList>
            <person name="Nakamura Y."/>
            <person name="Kaneko T."/>
            <person name="Sato S."/>
            <person name="Mimuro M."/>
            <person name="Miyashita H."/>
            <person name="Tsuchiya T."/>
            <person name="Sasamoto S."/>
            <person name="Watanabe A."/>
            <person name="Kawashima K."/>
            <person name="Kishida Y."/>
            <person name="Kiyokawa C."/>
            <person name="Kohara M."/>
            <person name="Matsumoto M."/>
            <person name="Matsuno A."/>
            <person name="Nakazaki N."/>
            <person name="Shimpo S."/>
            <person name="Takeuchi C."/>
            <person name="Yamada M."/>
            <person name="Tabata S."/>
        </authorList>
    </citation>
    <scope>NUCLEOTIDE SEQUENCE [LARGE SCALE GENOMIC DNA]</scope>
    <source>
        <strain>ATCC 29082 / PCC 7421</strain>
    </source>
</reference>
<protein>
    <recommendedName>
        <fullName>Photosystem I assembly protein Ycf4</fullName>
    </recommendedName>
</protein>
<name>YCF4_GLOVI</name>
<feature type="chain" id="PRO_0000217633" description="Photosystem I assembly protein Ycf4">
    <location>
        <begin position="1"/>
        <end position="188"/>
    </location>
</feature>
<feature type="transmembrane region" description="Helical" evidence="2">
    <location>
        <begin position="27"/>
        <end position="47"/>
    </location>
</feature>
<feature type="transmembrane region" description="Helical" evidence="2">
    <location>
        <begin position="70"/>
        <end position="90"/>
    </location>
</feature>
<gene>
    <name type="primary">ycf4</name>
    <name type="ordered locus">glr0079</name>
</gene>
<proteinExistence type="inferred from homology"/>
<evidence type="ECO:0000250" key="1"/>
<evidence type="ECO:0000255" key="2"/>
<evidence type="ECO:0000305" key="3"/>
<comment type="function">
    <text evidence="1">Seems to be required for the assembly of the photosystem I complex.</text>
</comment>
<comment type="subcellular location">
    <subcellularLocation>
        <location evidence="1">Cell inner membrane</location>
        <topology evidence="1">Multi-pass membrane protein</topology>
    </subcellularLocation>
</comment>
<comment type="similarity">
    <text evidence="3">Belongs to the Ycf4 family.</text>
</comment>
<keyword id="KW-0997">Cell inner membrane</keyword>
<keyword id="KW-1003">Cell membrane</keyword>
<keyword id="KW-0472">Membrane</keyword>
<keyword id="KW-0602">Photosynthesis</keyword>
<keyword id="KW-1185">Reference proteome</keyword>
<keyword id="KW-0812">Transmembrane</keyword>
<keyword id="KW-1133">Transmembrane helix</keyword>